<gene>
    <name type="primary">C3orf49</name>
</gene>
<proteinExistence type="evidence at transcript level"/>
<protein>
    <recommendedName>
        <fullName>Putative uncharacterized protein C3orf49</fullName>
    </recommendedName>
</protein>
<sequence>MAQPQLYLPEPFKIAYRKVGQCRRFQQLKKKNGSFKRKGIERWHRAVSTNLLKQNVLVPKEESSSDSDMGFHESQQNQKSNLKTKVKTAFGRMLSYKYRSKPACASQEGSTDHKEALLSNTQSLLPRIVKEFSSPKLFTAKMRKLSENATIQLDVVEAETEEITQGNTLLRARRTTKRLSVTSLPSGLQKGPYSPKKRPHFPALKKKKRGMENILRKSDLTVGKLQMQVDDLIETVTDKSMKLLAQRHAELQQCEFLGDEILQSSKQFQRISKRTMRKYKLKNMTTKGPGDS</sequence>
<keyword id="KW-1185">Reference proteome</keyword>
<organism>
    <name type="scientific">Homo sapiens</name>
    <name type="common">Human</name>
    <dbReference type="NCBI Taxonomy" id="9606"/>
    <lineage>
        <taxon>Eukaryota</taxon>
        <taxon>Metazoa</taxon>
        <taxon>Chordata</taxon>
        <taxon>Craniata</taxon>
        <taxon>Vertebrata</taxon>
        <taxon>Euteleostomi</taxon>
        <taxon>Mammalia</taxon>
        <taxon>Eutheria</taxon>
        <taxon>Euarchontoglires</taxon>
        <taxon>Primates</taxon>
        <taxon>Haplorrhini</taxon>
        <taxon>Catarrhini</taxon>
        <taxon>Hominidae</taxon>
        <taxon>Homo</taxon>
    </lineage>
</organism>
<accession>Q96BT1</accession>
<feature type="chain" id="PRO_0000263674" description="Putative uncharacterized protein C3orf49">
    <location>
        <begin position="1"/>
        <end position="292"/>
    </location>
</feature>
<feature type="region of interest" description="Disordered" evidence="1">
    <location>
        <begin position="62"/>
        <end position="81"/>
    </location>
</feature>
<reference key="1">
    <citation type="journal article" date="2006" name="Nature">
        <title>The DNA sequence, annotation and analysis of human chromosome 3.</title>
        <authorList>
            <person name="Muzny D.M."/>
            <person name="Scherer S.E."/>
            <person name="Kaul R."/>
            <person name="Wang J."/>
            <person name="Yu J."/>
            <person name="Sudbrak R."/>
            <person name="Buhay C.J."/>
            <person name="Chen R."/>
            <person name="Cree A."/>
            <person name="Ding Y."/>
            <person name="Dugan-Rocha S."/>
            <person name="Gill R."/>
            <person name="Gunaratne P."/>
            <person name="Harris R.A."/>
            <person name="Hawes A.C."/>
            <person name="Hernandez J."/>
            <person name="Hodgson A.V."/>
            <person name="Hume J."/>
            <person name="Jackson A."/>
            <person name="Khan Z.M."/>
            <person name="Kovar-Smith C."/>
            <person name="Lewis L.R."/>
            <person name="Lozado R.J."/>
            <person name="Metzker M.L."/>
            <person name="Milosavljevic A."/>
            <person name="Miner G.R."/>
            <person name="Morgan M.B."/>
            <person name="Nazareth L.V."/>
            <person name="Scott G."/>
            <person name="Sodergren E."/>
            <person name="Song X.-Z."/>
            <person name="Steffen D."/>
            <person name="Wei S."/>
            <person name="Wheeler D.A."/>
            <person name="Wright M.W."/>
            <person name="Worley K.C."/>
            <person name="Yuan Y."/>
            <person name="Zhang Z."/>
            <person name="Adams C.Q."/>
            <person name="Ansari-Lari M.A."/>
            <person name="Ayele M."/>
            <person name="Brown M.J."/>
            <person name="Chen G."/>
            <person name="Chen Z."/>
            <person name="Clendenning J."/>
            <person name="Clerc-Blankenburg K.P."/>
            <person name="Chen R."/>
            <person name="Chen Z."/>
            <person name="Davis C."/>
            <person name="Delgado O."/>
            <person name="Dinh H.H."/>
            <person name="Dong W."/>
            <person name="Draper H."/>
            <person name="Ernst S."/>
            <person name="Fu G."/>
            <person name="Gonzalez-Garay M.L."/>
            <person name="Garcia D.K."/>
            <person name="Gillett W."/>
            <person name="Gu J."/>
            <person name="Hao B."/>
            <person name="Haugen E."/>
            <person name="Havlak P."/>
            <person name="He X."/>
            <person name="Hennig S."/>
            <person name="Hu S."/>
            <person name="Huang W."/>
            <person name="Jackson L.R."/>
            <person name="Jacob L.S."/>
            <person name="Kelly S.H."/>
            <person name="Kube M."/>
            <person name="Levy R."/>
            <person name="Li Z."/>
            <person name="Liu B."/>
            <person name="Liu J."/>
            <person name="Liu W."/>
            <person name="Lu J."/>
            <person name="Maheshwari M."/>
            <person name="Nguyen B.-V."/>
            <person name="Okwuonu G.O."/>
            <person name="Palmeiri A."/>
            <person name="Pasternak S."/>
            <person name="Perez L.M."/>
            <person name="Phelps K.A."/>
            <person name="Plopper F.J."/>
            <person name="Qiang B."/>
            <person name="Raymond C."/>
            <person name="Rodriguez R."/>
            <person name="Saenphimmachak C."/>
            <person name="Santibanez J."/>
            <person name="Shen H."/>
            <person name="Shen Y."/>
            <person name="Subramanian S."/>
            <person name="Tabor P.E."/>
            <person name="Verduzco D."/>
            <person name="Waldron L."/>
            <person name="Wang J."/>
            <person name="Wang J."/>
            <person name="Wang Q."/>
            <person name="Williams G.A."/>
            <person name="Wong G.K.-S."/>
            <person name="Yao Z."/>
            <person name="Zhang J."/>
            <person name="Zhang X."/>
            <person name="Zhao G."/>
            <person name="Zhou J."/>
            <person name="Zhou Y."/>
            <person name="Nelson D."/>
            <person name="Lehrach H."/>
            <person name="Reinhardt R."/>
            <person name="Naylor S.L."/>
            <person name="Yang H."/>
            <person name="Olson M."/>
            <person name="Weinstock G."/>
            <person name="Gibbs R.A."/>
        </authorList>
    </citation>
    <scope>NUCLEOTIDE SEQUENCE [LARGE SCALE GENOMIC DNA]</scope>
</reference>
<reference key="2">
    <citation type="journal article" date="2004" name="Genome Res.">
        <title>The status, quality, and expansion of the NIH full-length cDNA project: the Mammalian Gene Collection (MGC).</title>
        <authorList>
            <consortium name="The MGC Project Team"/>
        </authorList>
    </citation>
    <scope>NUCLEOTIDE SEQUENCE [LARGE SCALE MRNA]</scope>
    <source>
        <tissue>Lung</tissue>
    </source>
</reference>
<evidence type="ECO:0000256" key="1">
    <source>
        <dbReference type="SAM" id="MobiDB-lite"/>
    </source>
</evidence>
<dbReference type="EMBL" id="AC104162">
    <property type="status" value="NOT_ANNOTATED_CDS"/>
    <property type="molecule type" value="Genomic_DNA"/>
</dbReference>
<dbReference type="EMBL" id="BC015210">
    <property type="status" value="NOT_ANNOTATED_CDS"/>
    <property type="molecule type" value="mRNA"/>
</dbReference>
<dbReference type="CCDS" id="CCDS87102.1"/>
<dbReference type="RefSeq" id="NP_001342165.1">
    <property type="nucleotide sequence ID" value="NM_001355236.2"/>
</dbReference>
<dbReference type="SMR" id="Q96BT1"/>
<dbReference type="IntAct" id="Q96BT1">
    <property type="interactions" value="14"/>
</dbReference>
<dbReference type="STRING" id="9606.ENSP00000295896"/>
<dbReference type="GlyGen" id="Q96BT1">
    <property type="glycosylation" value="1 site, 1 O-linked glycan (1 site)"/>
</dbReference>
<dbReference type="iPTMnet" id="Q96BT1"/>
<dbReference type="PhosphoSitePlus" id="Q96BT1"/>
<dbReference type="BioMuta" id="C3orf49"/>
<dbReference type="DMDM" id="74731271"/>
<dbReference type="MassIVE" id="Q96BT1"/>
<dbReference type="PaxDb" id="9606-ENSP00000295896"/>
<dbReference type="ProteomicsDB" id="76108"/>
<dbReference type="Antibodypedia" id="57064">
    <property type="antibodies" value="36 antibodies from 11 providers"/>
</dbReference>
<dbReference type="Ensembl" id="ENST00000295896.13">
    <property type="protein sequence ID" value="ENSP00000295896.8"/>
    <property type="gene ID" value="ENSG00000163632.15"/>
</dbReference>
<dbReference type="GeneID" id="132200"/>
<dbReference type="MANE-Select" id="ENST00000295896.13">
    <property type="protein sequence ID" value="ENSP00000295896.8"/>
    <property type="RefSeq nucleotide sequence ID" value="NM_001355236.2"/>
    <property type="RefSeq protein sequence ID" value="NP_001342165.1"/>
</dbReference>
<dbReference type="UCSC" id="uc003dls.5">
    <property type="organism name" value="human"/>
</dbReference>
<dbReference type="AGR" id="HGNC:25190"/>
<dbReference type="GeneCards" id="C3orf49"/>
<dbReference type="HGNC" id="HGNC:25190">
    <property type="gene designation" value="C3orf49"/>
</dbReference>
<dbReference type="HPA" id="ENSG00000163632">
    <property type="expression patterns" value="Low tissue specificity"/>
</dbReference>
<dbReference type="neXtProt" id="NX_Q96BT1"/>
<dbReference type="OpenTargets" id="ENSG00000163632"/>
<dbReference type="VEuPathDB" id="HostDB:ENSG00000163632"/>
<dbReference type="eggNOG" id="ENOG502S0VW">
    <property type="taxonomic scope" value="Eukaryota"/>
</dbReference>
<dbReference type="GeneTree" id="ENSGT00390000007318"/>
<dbReference type="HOGENOM" id="CLU_1032658_0_0_1"/>
<dbReference type="InParanoid" id="Q96BT1"/>
<dbReference type="OrthoDB" id="9042669at2759"/>
<dbReference type="PAN-GO" id="Q96BT1">
    <property type="GO annotations" value="0 GO annotations based on evolutionary models"/>
</dbReference>
<dbReference type="PhylomeDB" id="Q96BT1"/>
<dbReference type="TreeFam" id="TF337264"/>
<dbReference type="PathwayCommons" id="Q96BT1"/>
<dbReference type="SignaLink" id="Q96BT1"/>
<dbReference type="CD-CODE" id="91857CE7">
    <property type="entry name" value="Nucleolus"/>
</dbReference>
<dbReference type="Pharos" id="Q96BT1">
    <property type="development level" value="Tdark"/>
</dbReference>
<dbReference type="PRO" id="PR:Q96BT1"/>
<dbReference type="Proteomes" id="UP000005640">
    <property type="component" value="Chromosome 3"/>
</dbReference>
<dbReference type="RNAct" id="Q96BT1">
    <property type="molecule type" value="protein"/>
</dbReference>
<dbReference type="Bgee" id="ENSG00000163632">
    <property type="expression patterns" value="Expressed in male germ line stem cell (sensu Vertebrata) in testis and 119 other cell types or tissues"/>
</dbReference>
<dbReference type="ExpressionAtlas" id="Q96BT1">
    <property type="expression patterns" value="baseline and differential"/>
</dbReference>
<dbReference type="InterPro" id="IPR055322">
    <property type="entry name" value="C3orf49-like"/>
</dbReference>
<dbReference type="PANTHER" id="PTHR36473">
    <property type="entry name" value="CHROMOSOME 3 OPEN READING FRAME 49"/>
    <property type="match status" value="1"/>
</dbReference>
<dbReference type="PANTHER" id="PTHR36473:SF1">
    <property type="entry name" value="GENE 11100-RELATED"/>
    <property type="match status" value="1"/>
</dbReference>
<name>CC049_HUMAN</name>